<gene>
    <name evidence="1" type="primary">rpoC</name>
    <name type="ordered locus">Mnod_1902</name>
</gene>
<organism>
    <name type="scientific">Methylobacterium nodulans (strain LMG 21967 / CNCM I-2342 / ORS 2060)</name>
    <dbReference type="NCBI Taxonomy" id="460265"/>
    <lineage>
        <taxon>Bacteria</taxon>
        <taxon>Pseudomonadati</taxon>
        <taxon>Pseudomonadota</taxon>
        <taxon>Alphaproteobacteria</taxon>
        <taxon>Hyphomicrobiales</taxon>
        <taxon>Methylobacteriaceae</taxon>
        <taxon>Methylobacterium</taxon>
    </lineage>
</organism>
<proteinExistence type="inferred from homology"/>
<dbReference type="EC" id="2.7.7.6" evidence="1"/>
<dbReference type="EMBL" id="CP001349">
    <property type="protein sequence ID" value="ACL56891.1"/>
    <property type="molecule type" value="Genomic_DNA"/>
</dbReference>
<dbReference type="RefSeq" id="WP_015928582.1">
    <property type="nucleotide sequence ID" value="NC_011894.1"/>
</dbReference>
<dbReference type="SMR" id="B8IS79"/>
<dbReference type="STRING" id="460265.Mnod_1902"/>
<dbReference type="KEGG" id="mno:Mnod_1902"/>
<dbReference type="eggNOG" id="COG0086">
    <property type="taxonomic scope" value="Bacteria"/>
</dbReference>
<dbReference type="HOGENOM" id="CLU_000524_3_1_5"/>
<dbReference type="OrthoDB" id="9815296at2"/>
<dbReference type="Proteomes" id="UP000008207">
    <property type="component" value="Chromosome"/>
</dbReference>
<dbReference type="GO" id="GO:0000428">
    <property type="term" value="C:DNA-directed RNA polymerase complex"/>
    <property type="evidence" value="ECO:0007669"/>
    <property type="project" value="UniProtKB-KW"/>
</dbReference>
<dbReference type="GO" id="GO:0003677">
    <property type="term" value="F:DNA binding"/>
    <property type="evidence" value="ECO:0007669"/>
    <property type="project" value="UniProtKB-UniRule"/>
</dbReference>
<dbReference type="GO" id="GO:0003899">
    <property type="term" value="F:DNA-directed RNA polymerase activity"/>
    <property type="evidence" value="ECO:0007669"/>
    <property type="project" value="UniProtKB-UniRule"/>
</dbReference>
<dbReference type="GO" id="GO:0000287">
    <property type="term" value="F:magnesium ion binding"/>
    <property type="evidence" value="ECO:0007669"/>
    <property type="project" value="UniProtKB-UniRule"/>
</dbReference>
<dbReference type="GO" id="GO:0008270">
    <property type="term" value="F:zinc ion binding"/>
    <property type="evidence" value="ECO:0007669"/>
    <property type="project" value="UniProtKB-UniRule"/>
</dbReference>
<dbReference type="GO" id="GO:0006351">
    <property type="term" value="P:DNA-templated transcription"/>
    <property type="evidence" value="ECO:0007669"/>
    <property type="project" value="UniProtKB-UniRule"/>
</dbReference>
<dbReference type="CDD" id="cd02655">
    <property type="entry name" value="RNAP_beta'_C"/>
    <property type="match status" value="1"/>
</dbReference>
<dbReference type="CDD" id="cd01609">
    <property type="entry name" value="RNAP_beta'_N"/>
    <property type="match status" value="1"/>
</dbReference>
<dbReference type="Gene3D" id="1.10.132.30">
    <property type="match status" value="1"/>
</dbReference>
<dbReference type="Gene3D" id="1.10.150.390">
    <property type="match status" value="1"/>
</dbReference>
<dbReference type="Gene3D" id="1.10.1790.20">
    <property type="match status" value="1"/>
</dbReference>
<dbReference type="Gene3D" id="1.10.40.90">
    <property type="match status" value="1"/>
</dbReference>
<dbReference type="Gene3D" id="2.40.40.20">
    <property type="match status" value="1"/>
</dbReference>
<dbReference type="Gene3D" id="2.40.50.100">
    <property type="match status" value="3"/>
</dbReference>
<dbReference type="Gene3D" id="4.10.860.120">
    <property type="entry name" value="RNA polymerase II, clamp domain"/>
    <property type="match status" value="1"/>
</dbReference>
<dbReference type="Gene3D" id="1.10.274.100">
    <property type="entry name" value="RNA polymerase Rpb1, domain 3"/>
    <property type="match status" value="2"/>
</dbReference>
<dbReference type="HAMAP" id="MF_01322">
    <property type="entry name" value="RNApol_bact_RpoC"/>
    <property type="match status" value="1"/>
</dbReference>
<dbReference type="InterPro" id="IPR045867">
    <property type="entry name" value="DNA-dir_RpoC_beta_prime"/>
</dbReference>
<dbReference type="InterPro" id="IPR012754">
    <property type="entry name" value="DNA-dir_RpoC_beta_prime_bact"/>
</dbReference>
<dbReference type="InterPro" id="IPR000722">
    <property type="entry name" value="RNA_pol_asu"/>
</dbReference>
<dbReference type="InterPro" id="IPR006592">
    <property type="entry name" value="RNA_pol_N"/>
</dbReference>
<dbReference type="InterPro" id="IPR007080">
    <property type="entry name" value="RNA_pol_Rpb1_1"/>
</dbReference>
<dbReference type="InterPro" id="IPR007066">
    <property type="entry name" value="RNA_pol_Rpb1_3"/>
</dbReference>
<dbReference type="InterPro" id="IPR042102">
    <property type="entry name" value="RNA_pol_Rpb1_3_sf"/>
</dbReference>
<dbReference type="InterPro" id="IPR007083">
    <property type="entry name" value="RNA_pol_Rpb1_4"/>
</dbReference>
<dbReference type="InterPro" id="IPR007081">
    <property type="entry name" value="RNA_pol_Rpb1_5"/>
</dbReference>
<dbReference type="InterPro" id="IPR044893">
    <property type="entry name" value="RNA_pol_Rpb1_clamp_domain"/>
</dbReference>
<dbReference type="InterPro" id="IPR038120">
    <property type="entry name" value="Rpb1_funnel_sf"/>
</dbReference>
<dbReference type="NCBIfam" id="TIGR02386">
    <property type="entry name" value="rpoC_TIGR"/>
    <property type="match status" value="1"/>
</dbReference>
<dbReference type="PANTHER" id="PTHR19376">
    <property type="entry name" value="DNA-DIRECTED RNA POLYMERASE"/>
    <property type="match status" value="1"/>
</dbReference>
<dbReference type="PANTHER" id="PTHR19376:SF54">
    <property type="entry name" value="DNA-DIRECTED RNA POLYMERASE SUBUNIT BETA"/>
    <property type="match status" value="1"/>
</dbReference>
<dbReference type="Pfam" id="PF04997">
    <property type="entry name" value="RNA_pol_Rpb1_1"/>
    <property type="match status" value="1"/>
</dbReference>
<dbReference type="Pfam" id="PF00623">
    <property type="entry name" value="RNA_pol_Rpb1_2"/>
    <property type="match status" value="1"/>
</dbReference>
<dbReference type="Pfam" id="PF04983">
    <property type="entry name" value="RNA_pol_Rpb1_3"/>
    <property type="match status" value="1"/>
</dbReference>
<dbReference type="Pfam" id="PF05000">
    <property type="entry name" value="RNA_pol_Rpb1_4"/>
    <property type="match status" value="1"/>
</dbReference>
<dbReference type="Pfam" id="PF04998">
    <property type="entry name" value="RNA_pol_Rpb1_5"/>
    <property type="match status" value="1"/>
</dbReference>
<dbReference type="SMART" id="SM00663">
    <property type="entry name" value="RPOLA_N"/>
    <property type="match status" value="1"/>
</dbReference>
<dbReference type="SUPFAM" id="SSF64484">
    <property type="entry name" value="beta and beta-prime subunits of DNA dependent RNA-polymerase"/>
    <property type="match status" value="1"/>
</dbReference>
<protein>
    <recommendedName>
        <fullName evidence="1">DNA-directed RNA polymerase subunit beta'</fullName>
        <shortName evidence="1">RNAP subunit beta'</shortName>
        <ecNumber evidence="1">2.7.7.6</ecNumber>
    </recommendedName>
    <alternativeName>
        <fullName evidence="1">RNA polymerase subunit beta'</fullName>
    </alternativeName>
    <alternativeName>
        <fullName evidence="1">Transcriptase subunit beta'</fullName>
    </alternativeName>
</protein>
<comment type="function">
    <text evidence="1">DNA-dependent RNA polymerase catalyzes the transcription of DNA into RNA using the four ribonucleoside triphosphates as substrates.</text>
</comment>
<comment type="catalytic activity">
    <reaction evidence="1">
        <text>RNA(n) + a ribonucleoside 5'-triphosphate = RNA(n+1) + diphosphate</text>
        <dbReference type="Rhea" id="RHEA:21248"/>
        <dbReference type="Rhea" id="RHEA-COMP:14527"/>
        <dbReference type="Rhea" id="RHEA-COMP:17342"/>
        <dbReference type="ChEBI" id="CHEBI:33019"/>
        <dbReference type="ChEBI" id="CHEBI:61557"/>
        <dbReference type="ChEBI" id="CHEBI:140395"/>
        <dbReference type="EC" id="2.7.7.6"/>
    </reaction>
</comment>
<comment type="cofactor">
    <cofactor evidence="1">
        <name>Mg(2+)</name>
        <dbReference type="ChEBI" id="CHEBI:18420"/>
    </cofactor>
    <text evidence="1">Binds 1 Mg(2+) ion per subunit.</text>
</comment>
<comment type="cofactor">
    <cofactor evidence="1">
        <name>Zn(2+)</name>
        <dbReference type="ChEBI" id="CHEBI:29105"/>
    </cofactor>
    <text evidence="1">Binds 2 Zn(2+) ions per subunit.</text>
</comment>
<comment type="subunit">
    <text evidence="1">The RNAP catalytic core consists of 2 alpha, 1 beta, 1 beta' and 1 omega subunit. When a sigma factor is associated with the core the holoenzyme is formed, which can initiate transcription.</text>
</comment>
<comment type="similarity">
    <text evidence="1">Belongs to the RNA polymerase beta' chain family.</text>
</comment>
<accession>B8IS79</accession>
<keyword id="KW-0240">DNA-directed RNA polymerase</keyword>
<keyword id="KW-0460">Magnesium</keyword>
<keyword id="KW-0479">Metal-binding</keyword>
<keyword id="KW-0548">Nucleotidyltransferase</keyword>
<keyword id="KW-1185">Reference proteome</keyword>
<keyword id="KW-0804">Transcription</keyword>
<keyword id="KW-0808">Transferase</keyword>
<keyword id="KW-0862">Zinc</keyword>
<reference key="1">
    <citation type="submission" date="2009-01" db="EMBL/GenBank/DDBJ databases">
        <title>Complete sequence of chromosome of Methylobacterium nodulans ORS 2060.</title>
        <authorList>
            <consortium name="US DOE Joint Genome Institute"/>
            <person name="Lucas S."/>
            <person name="Copeland A."/>
            <person name="Lapidus A."/>
            <person name="Glavina del Rio T."/>
            <person name="Dalin E."/>
            <person name="Tice H."/>
            <person name="Bruce D."/>
            <person name="Goodwin L."/>
            <person name="Pitluck S."/>
            <person name="Sims D."/>
            <person name="Brettin T."/>
            <person name="Detter J.C."/>
            <person name="Han C."/>
            <person name="Larimer F."/>
            <person name="Land M."/>
            <person name="Hauser L."/>
            <person name="Kyrpides N."/>
            <person name="Ivanova N."/>
            <person name="Marx C.J."/>
            <person name="Richardson P."/>
        </authorList>
    </citation>
    <scope>NUCLEOTIDE SEQUENCE [LARGE SCALE GENOMIC DNA]</scope>
    <source>
        <strain>LMG 21967 / CNCM I-2342 / ORS 2060</strain>
    </source>
</reference>
<feature type="chain" id="PRO_1000165844" description="DNA-directed RNA polymerase subunit beta'">
    <location>
        <begin position="1"/>
        <end position="1400"/>
    </location>
</feature>
<feature type="binding site" evidence="1">
    <location>
        <position position="71"/>
    </location>
    <ligand>
        <name>Zn(2+)</name>
        <dbReference type="ChEBI" id="CHEBI:29105"/>
        <label>1</label>
    </ligand>
</feature>
<feature type="binding site" evidence="1">
    <location>
        <position position="73"/>
    </location>
    <ligand>
        <name>Zn(2+)</name>
        <dbReference type="ChEBI" id="CHEBI:29105"/>
        <label>1</label>
    </ligand>
</feature>
<feature type="binding site" evidence="1">
    <location>
        <position position="86"/>
    </location>
    <ligand>
        <name>Zn(2+)</name>
        <dbReference type="ChEBI" id="CHEBI:29105"/>
        <label>1</label>
    </ligand>
</feature>
<feature type="binding site" evidence="1">
    <location>
        <position position="89"/>
    </location>
    <ligand>
        <name>Zn(2+)</name>
        <dbReference type="ChEBI" id="CHEBI:29105"/>
        <label>1</label>
    </ligand>
</feature>
<feature type="binding site" evidence="1">
    <location>
        <position position="462"/>
    </location>
    <ligand>
        <name>Mg(2+)</name>
        <dbReference type="ChEBI" id="CHEBI:18420"/>
    </ligand>
</feature>
<feature type="binding site" evidence="1">
    <location>
        <position position="464"/>
    </location>
    <ligand>
        <name>Mg(2+)</name>
        <dbReference type="ChEBI" id="CHEBI:18420"/>
    </ligand>
</feature>
<feature type="binding site" evidence="1">
    <location>
        <position position="466"/>
    </location>
    <ligand>
        <name>Mg(2+)</name>
        <dbReference type="ChEBI" id="CHEBI:18420"/>
    </ligand>
</feature>
<feature type="binding site" evidence="1">
    <location>
        <position position="820"/>
    </location>
    <ligand>
        <name>Zn(2+)</name>
        <dbReference type="ChEBI" id="CHEBI:29105"/>
        <label>2</label>
    </ligand>
</feature>
<feature type="binding site" evidence="1">
    <location>
        <position position="893"/>
    </location>
    <ligand>
        <name>Zn(2+)</name>
        <dbReference type="ChEBI" id="CHEBI:29105"/>
        <label>2</label>
    </ligand>
</feature>
<feature type="binding site" evidence="1">
    <location>
        <position position="900"/>
    </location>
    <ligand>
        <name>Zn(2+)</name>
        <dbReference type="ChEBI" id="CHEBI:29105"/>
        <label>2</label>
    </ligand>
</feature>
<feature type="binding site" evidence="1">
    <location>
        <position position="903"/>
    </location>
    <ligand>
        <name>Zn(2+)</name>
        <dbReference type="ChEBI" id="CHEBI:29105"/>
        <label>2</label>
    </ligand>
</feature>
<name>RPOC_METNO</name>
<evidence type="ECO:0000255" key="1">
    <source>
        <dbReference type="HAMAP-Rule" id="MF_01322"/>
    </source>
</evidence>
<sequence>MNQEVMNLFNQQAQPQSFDQIKISISSPEKILSWSYGEIKKPETINYRTFKPERDGLFCARIFGPIKDYECLCGKYKRMKYKGVICEKCGVEVTLARVRRDRMGHIELAAPVAHIWFLKSLPSRIGLLLDMALKDLERILYFESYVVIEPGLTPLKERQLLSEEEYLRAQEEYGEDSFTAMIGAEAIRRILQDLNLEKIAADLRQEIATTTSDLKPKKLLKRLKIIEAFQMSGNRPEWMILTVVPVIPPDLRPLVPLDGGRFATSDLNDLYRRVINRNNRLKRLIELRAPDIIIRNEKRMLQEAVDALFDNGRRGRVITGANKRPLKSLADMLKGKQGRFRQNLLGKRVDYSGRSVIVVGPELKLHQCGLPKKMALELFKPFIYARLDAKGFSATVKQAKKLVEKEKPEVWDILDEVIREHPVMLNRAPTLHRLGIQAFEPKLIEGKAIQLHPLVCAAFNADFDGDQMAVHVPLSLEAQLEARVLMMSTNNILHPANGAPIIVPSQDIVLGLYYLSIVADGAPGEYKPNNPQNPMQGVYGDFGELEHALASRAVTLHSRIKWRWKGLGPDGEEISRTYDTTPGRVILSSVLPRHPKVPFDVVNKLMTKKEISAMIDIVYRHCGQKESVIFCDRIMGLGFSHAFKAGISFGKDDMVVPENKWSIVDETRALVKDYEQQYQDGLITQGEKYNKVVDAWAKCSDRLASEMMNRISSVQKDENGADKQVNSIYMMSHSGARGSPAQMKQLAAMRGLMAKPSGEIIESPIISNFKEGLDVLEYFNSTHGARKGLADTALKTANSGYLTRRLVDVAQDAVIREVDCGTENGIRMRAIIDAGQVVATLATRILGRATAEDLVAPDGTIIVPKGQMIEERHLEAISKAGIQEVKIRSVLVCATKNGVCATCYGRDLARGTPVNQGEAVGVIAAQSIGEPGTQLTMRTFHIGGAAQIADSSFIESSFEGTVRIRNRGLARNSDGDLVAIGRNVAVVIVGPDGTERAVHRLQYGARVRVDEGDQIKRGQRIAEWDPYTRPILTEVDGIVAYEDLIDGQSITETTDESTGIAKRVVIDWRGSARTADLRPAIAIHDQTGKVQKLPRGSDARALLPVDAIIGVDPGARVKAGDILARVSTESAKTRDITGGLPRVAELFEARRPKDAAIIAEKSGTISFGRDYKNKRRLTLTPHDGSEPVEYLIPKGKHIHLQDGDVVEIGDFIVDGNPAPHDILAIKGVEELAAYLVNEIQEVYRLQGVSINDKHIEVIVRQMLQKVEITDSGDSEILTGDQIDRTELQEINEQLIAEGKKPVQGVPVLLGITKASLQTRSFISAASFQETTRVLTEAAVNGKVDTLEGLKENVIVGSLIPAGTGAMIADIKSIARRRDDLIMAQKAAESGAALPELPAAE</sequence>